<accession>B2VVA8</accession>
<reference key="1">
    <citation type="journal article" date="2013" name="G3 (Bethesda)">
        <title>Comparative genomics of a plant-pathogenic fungus, Pyrenophora tritici-repentis, reveals transduplication and the impact of repeat elements on pathogenicity and population divergence.</title>
        <authorList>
            <person name="Manning V.A."/>
            <person name="Pandelova I."/>
            <person name="Dhillon B."/>
            <person name="Wilhelm L.J."/>
            <person name="Goodwin S.B."/>
            <person name="Berlin A.M."/>
            <person name="Figueroa M."/>
            <person name="Freitag M."/>
            <person name="Hane J.K."/>
            <person name="Henrissat B."/>
            <person name="Holman W.H."/>
            <person name="Kodira C.D."/>
            <person name="Martin J."/>
            <person name="Oliver R.P."/>
            <person name="Robbertse B."/>
            <person name="Schackwitz W."/>
            <person name="Schwartz D.C."/>
            <person name="Spatafora J.W."/>
            <person name="Turgeon B.G."/>
            <person name="Yandava C."/>
            <person name="Young S."/>
            <person name="Zhou S."/>
            <person name="Zeng Q."/>
            <person name="Grigoriev I.V."/>
            <person name="Ma L.-J."/>
            <person name="Ciuffetti L.M."/>
        </authorList>
    </citation>
    <scope>NUCLEOTIDE SEQUENCE [LARGE SCALE GENOMIC DNA]</scope>
    <source>
        <strain>Pt-1C-BFP</strain>
    </source>
</reference>
<proteinExistence type="inferred from homology"/>
<name>ARGJ_PYRTR</name>
<feature type="chain" id="PRO_0000398094" description="Arginine biosynthesis bifunctional protein ArgJ alpha chain" evidence="1">
    <location>
        <begin position="1"/>
        <end position="238"/>
    </location>
</feature>
<feature type="chain" id="PRO_0000398095" description="Arginine biosynthesis bifunctional protein ArgJ beta chain" evidence="1">
    <location>
        <begin position="239"/>
        <end position="462"/>
    </location>
</feature>
<feature type="active site" description="Nucleophile" evidence="1">
    <location>
        <position position="239"/>
    </location>
</feature>
<feature type="binding site" evidence="1">
    <location>
        <position position="200"/>
    </location>
    <ligand>
        <name>substrate</name>
    </ligand>
</feature>
<feature type="binding site" evidence="1">
    <location>
        <position position="228"/>
    </location>
    <ligand>
        <name>substrate</name>
    </ligand>
</feature>
<feature type="binding site" evidence="1">
    <location>
        <position position="239"/>
    </location>
    <ligand>
        <name>substrate</name>
    </ligand>
</feature>
<feature type="binding site" evidence="1">
    <location>
        <position position="326"/>
    </location>
    <ligand>
        <name>substrate</name>
    </ligand>
</feature>
<feature type="binding site" evidence="1">
    <location>
        <position position="457"/>
    </location>
    <ligand>
        <name>substrate</name>
    </ligand>
</feature>
<feature type="binding site" evidence="1">
    <location>
        <position position="462"/>
    </location>
    <ligand>
        <name>substrate</name>
    </ligand>
</feature>
<feature type="site" description="Involved in the stabilization of negative charge on the oxyanion by the formation of the oxyanion hole" evidence="1">
    <location>
        <position position="161"/>
    </location>
</feature>
<feature type="site" description="Involved in the stabilization of negative charge on the oxyanion by the formation of the oxyanion hole" evidence="1">
    <location>
        <position position="162"/>
    </location>
</feature>
<feature type="site" description="Cleavage; by autolysis" evidence="1">
    <location>
        <begin position="238"/>
        <end position="239"/>
    </location>
</feature>
<comment type="function">
    <text evidence="1">Catalyzes two activities which are involved in the cyclic version of arginine biosynthesis: the synthesis of acetylglutamate from glutamate and acetyl-CoA, and of ornithine by transacetylation between acetylornithine and glutamate.</text>
</comment>
<comment type="catalytic activity">
    <reaction evidence="1">
        <text>N(2)-acetyl-L-ornithine + L-glutamate = N-acetyl-L-glutamate + L-ornithine</text>
        <dbReference type="Rhea" id="RHEA:15349"/>
        <dbReference type="ChEBI" id="CHEBI:29985"/>
        <dbReference type="ChEBI" id="CHEBI:44337"/>
        <dbReference type="ChEBI" id="CHEBI:46911"/>
        <dbReference type="ChEBI" id="CHEBI:57805"/>
        <dbReference type="EC" id="2.3.1.35"/>
    </reaction>
</comment>
<comment type="catalytic activity">
    <reaction evidence="1">
        <text>L-glutamate + acetyl-CoA = N-acetyl-L-glutamate + CoA + H(+)</text>
        <dbReference type="Rhea" id="RHEA:24292"/>
        <dbReference type="ChEBI" id="CHEBI:15378"/>
        <dbReference type="ChEBI" id="CHEBI:29985"/>
        <dbReference type="ChEBI" id="CHEBI:44337"/>
        <dbReference type="ChEBI" id="CHEBI:57287"/>
        <dbReference type="ChEBI" id="CHEBI:57288"/>
        <dbReference type="EC" id="2.3.1.1"/>
    </reaction>
</comment>
<comment type="pathway">
    <text evidence="1">Amino-acid biosynthesis; L-arginine biosynthesis; L-ornithine and N-acetyl-L-glutamate from L-glutamate and N(2)-acetyl-L-ornithine (cyclic): step 1/1.</text>
</comment>
<comment type="pathway">
    <text evidence="1">Amino-acid biosynthesis; L-arginine biosynthesis; N(2)-acetyl-L-ornithine from L-glutamate: step 1/4.</text>
</comment>
<comment type="subunit">
    <text evidence="1">Heterodimer of an alpha and a beta chain.</text>
</comment>
<comment type="subcellular location">
    <subcellularLocation>
        <location evidence="1">Mitochondrion matrix</location>
    </subcellularLocation>
</comment>
<comment type="PTM">
    <text evidence="1">The alpha and beta chains are autoproteolytically processed from a single precursor protein within the mitochondrion.</text>
</comment>
<comment type="miscellaneous">
    <text evidence="1">This protein may be expected to contain an N-terminal transit peptide but none has been predicted.</text>
</comment>
<comment type="similarity">
    <text evidence="1">Belongs to the ArgJ family.</text>
</comment>
<keyword id="KW-0012">Acyltransferase</keyword>
<keyword id="KW-0028">Amino-acid biosynthesis</keyword>
<keyword id="KW-0055">Arginine biosynthesis</keyword>
<keyword id="KW-0068">Autocatalytic cleavage</keyword>
<keyword id="KW-0496">Mitochondrion</keyword>
<keyword id="KW-0511">Multifunctional enzyme</keyword>
<keyword id="KW-1185">Reference proteome</keyword>
<keyword id="KW-0808">Transferase</keyword>
<dbReference type="EC" id="2.3.1.35" evidence="1"/>
<dbReference type="EC" id="2.3.1.1" evidence="1"/>
<dbReference type="EMBL" id="DS231615">
    <property type="protein sequence ID" value="EDU40613.1"/>
    <property type="molecule type" value="Genomic_DNA"/>
</dbReference>
<dbReference type="RefSeq" id="XP_001931508.1">
    <property type="nucleotide sequence ID" value="XM_001931473.1"/>
</dbReference>
<dbReference type="SMR" id="B2VVA8"/>
<dbReference type="FunCoup" id="B2VVA8">
    <property type="interactions" value="285"/>
</dbReference>
<dbReference type="STRING" id="426418.B2VVA8"/>
<dbReference type="MEROPS" id="T05.001"/>
<dbReference type="EnsemblFungi" id="EDU40613">
    <property type="protein sequence ID" value="EDU40613"/>
    <property type="gene ID" value="PTRG_01175"/>
</dbReference>
<dbReference type="GeneID" id="6339309"/>
<dbReference type="KEGG" id="ptrr:6339309"/>
<dbReference type="eggNOG" id="KOG2786">
    <property type="taxonomic scope" value="Eukaryota"/>
</dbReference>
<dbReference type="HOGENOM" id="CLU_027172_1_0_1"/>
<dbReference type="InParanoid" id="B2VVA8"/>
<dbReference type="OMA" id="WGRIVMA"/>
<dbReference type="OrthoDB" id="8274at28556"/>
<dbReference type="UniPathway" id="UPA00068">
    <property type="reaction ID" value="UER00106"/>
</dbReference>
<dbReference type="UniPathway" id="UPA00068">
    <property type="reaction ID" value="UER00111"/>
</dbReference>
<dbReference type="Proteomes" id="UP000001471">
    <property type="component" value="Unassembled WGS sequence"/>
</dbReference>
<dbReference type="GO" id="GO:0005759">
    <property type="term" value="C:mitochondrial matrix"/>
    <property type="evidence" value="ECO:0007669"/>
    <property type="project" value="UniProtKB-SubCell"/>
</dbReference>
<dbReference type="GO" id="GO:0004358">
    <property type="term" value="F:glutamate N-acetyltransferase activity"/>
    <property type="evidence" value="ECO:0007669"/>
    <property type="project" value="UniProtKB-UniRule"/>
</dbReference>
<dbReference type="GO" id="GO:0004042">
    <property type="term" value="F:L-glutamate N-acetyltransferase activity"/>
    <property type="evidence" value="ECO:0007669"/>
    <property type="project" value="UniProtKB-UniRule"/>
</dbReference>
<dbReference type="GO" id="GO:0006526">
    <property type="term" value="P:L-arginine biosynthetic process"/>
    <property type="evidence" value="ECO:0007669"/>
    <property type="project" value="UniProtKB-UniRule"/>
</dbReference>
<dbReference type="GO" id="GO:0006592">
    <property type="term" value="P:ornithine biosynthetic process"/>
    <property type="evidence" value="ECO:0007669"/>
    <property type="project" value="EnsemblFungi"/>
</dbReference>
<dbReference type="CDD" id="cd02152">
    <property type="entry name" value="OAT"/>
    <property type="match status" value="1"/>
</dbReference>
<dbReference type="FunFam" id="3.60.70.12:FF:000001">
    <property type="entry name" value="Arginine biosynthesis bifunctional protein ArgJ, chloroplastic"/>
    <property type="match status" value="1"/>
</dbReference>
<dbReference type="FunFam" id="3.10.20.340:FF:000002">
    <property type="entry name" value="Arginine biosynthesis bifunctional protein ArgJ, mitochondrial"/>
    <property type="match status" value="1"/>
</dbReference>
<dbReference type="Gene3D" id="3.30.2330.10">
    <property type="entry name" value="arginine biosynthesis bifunctional protein suprefamily"/>
    <property type="match status" value="1"/>
</dbReference>
<dbReference type="Gene3D" id="3.10.20.340">
    <property type="entry name" value="ArgJ beta chain, C-terminal domain"/>
    <property type="match status" value="1"/>
</dbReference>
<dbReference type="Gene3D" id="3.60.70.12">
    <property type="entry name" value="L-amino peptidase D-ALA esterase/amidase"/>
    <property type="match status" value="1"/>
</dbReference>
<dbReference type="HAMAP" id="MF_01106">
    <property type="entry name" value="ArgJ"/>
    <property type="match status" value="1"/>
</dbReference>
<dbReference type="InterPro" id="IPR002813">
    <property type="entry name" value="Arg_biosynth_ArgJ"/>
</dbReference>
<dbReference type="InterPro" id="IPR016117">
    <property type="entry name" value="ArgJ-like_dom_sf"/>
</dbReference>
<dbReference type="InterPro" id="IPR042195">
    <property type="entry name" value="ArgJ_beta_C"/>
</dbReference>
<dbReference type="NCBIfam" id="TIGR00120">
    <property type="entry name" value="ArgJ"/>
    <property type="match status" value="1"/>
</dbReference>
<dbReference type="NCBIfam" id="NF003802">
    <property type="entry name" value="PRK05388.1"/>
    <property type="match status" value="1"/>
</dbReference>
<dbReference type="PANTHER" id="PTHR23100">
    <property type="entry name" value="ARGININE BIOSYNTHESIS BIFUNCTIONAL PROTEIN ARGJ"/>
    <property type="match status" value="1"/>
</dbReference>
<dbReference type="PANTHER" id="PTHR23100:SF0">
    <property type="entry name" value="ARGININE BIOSYNTHESIS BIFUNCTIONAL PROTEIN ARGJ, MITOCHONDRIAL"/>
    <property type="match status" value="1"/>
</dbReference>
<dbReference type="Pfam" id="PF01960">
    <property type="entry name" value="ArgJ"/>
    <property type="match status" value="1"/>
</dbReference>
<dbReference type="SUPFAM" id="SSF56266">
    <property type="entry name" value="DmpA/ArgJ-like"/>
    <property type="match status" value="1"/>
</dbReference>
<protein>
    <recommendedName>
        <fullName evidence="1">Arginine biosynthesis bifunctional protein ArgJ, mitochondrial</fullName>
    </recommendedName>
    <domain>
        <recommendedName>
            <fullName evidence="1">Glutamate N-acetyltransferase</fullName>
            <shortName evidence="1">GAT</shortName>
            <ecNumber evidence="1">2.3.1.35</ecNumber>
        </recommendedName>
        <alternativeName>
            <fullName evidence="1">Ornithine acetyltransferase</fullName>
            <shortName evidence="1">OATase</shortName>
        </alternativeName>
        <alternativeName>
            <fullName evidence="1">Ornithine transacetylase</fullName>
        </alternativeName>
    </domain>
    <domain>
        <recommendedName>
            <fullName evidence="1">Amino-acid acetyltransferase</fullName>
            <ecNumber evidence="1">2.3.1.1</ecNumber>
        </recommendedName>
        <alternativeName>
            <fullName evidence="1">N-acetylglutamate synthase</fullName>
            <shortName evidence="1">AGS</shortName>
        </alternativeName>
    </domain>
    <component>
        <recommendedName>
            <fullName evidence="1">Arginine biosynthesis bifunctional protein ArgJ alpha chain</fullName>
        </recommendedName>
    </component>
    <component>
        <recommendedName>
            <fullName evidence="1">Arginine biosynthesis bifunctional protein ArgJ beta chain</fullName>
        </recommendedName>
    </component>
</protein>
<sequence>MSLARPNARLLSRTNRVFSSQIRTYSAPGDGVIPPAKKKYVPTSGTYPRGFKVGSAHVGVKASNTRFDDLALITSDTPCAAAAVFTKNKFQAAPVTVSRDLLKERGGQGIRAVIVNSGCANAVTGKGGIEDAKSMAKHTDACFTDSPDSPDSPYRSIVMSTGVIGQRLPIDKITSKIPTAFANLGDTHDHWLGTARAICTTDTFPKLMSKTFKLPSSDREYRIAGMTKGAGMIHPNMATLLGIICTDVPVAYFPLRRILASAANKSFNSISIDGDTSTNDTVAILANGAAGGDLIDTKFHSDFESLKQVITDFSIDLAKLVVRDGEGATKFVTIRVTNARSITDARRIASSIARSPLVKTALYGKDANWGRILCATGYSTARNPAVPEETSVSFVPTDGSEELKLLVNGEPEQVDEARAAKILEAEDLEIKVSVSNTPGKDTWFWTCDFSHEYVTINGDYRT</sequence>
<evidence type="ECO:0000255" key="1">
    <source>
        <dbReference type="HAMAP-Rule" id="MF_03124"/>
    </source>
</evidence>
<gene>
    <name type="ORF">PTRG_01175</name>
</gene>
<organism>
    <name type="scientific">Pyrenophora tritici-repentis (strain Pt-1C-BFP)</name>
    <name type="common">Wheat tan spot fungus</name>
    <name type="synonym">Drechslera tritici-repentis</name>
    <dbReference type="NCBI Taxonomy" id="426418"/>
    <lineage>
        <taxon>Eukaryota</taxon>
        <taxon>Fungi</taxon>
        <taxon>Dikarya</taxon>
        <taxon>Ascomycota</taxon>
        <taxon>Pezizomycotina</taxon>
        <taxon>Dothideomycetes</taxon>
        <taxon>Pleosporomycetidae</taxon>
        <taxon>Pleosporales</taxon>
        <taxon>Pleosporineae</taxon>
        <taxon>Pleosporaceae</taxon>
        <taxon>Pyrenophora</taxon>
    </lineage>
</organism>